<proteinExistence type="inferred from homology"/>
<dbReference type="EC" id="2.1.1.242" evidence="1"/>
<dbReference type="EMBL" id="AE017220">
    <property type="protein sequence ID" value="AAX67428.1"/>
    <property type="molecule type" value="Genomic_DNA"/>
</dbReference>
<dbReference type="RefSeq" id="WP_001165128.1">
    <property type="nucleotide sequence ID" value="NC_006905.1"/>
</dbReference>
<dbReference type="SMR" id="Q57IN4"/>
<dbReference type="KEGG" id="sec:SCH_3522"/>
<dbReference type="HOGENOM" id="CLU_076324_0_0_6"/>
<dbReference type="Proteomes" id="UP000000538">
    <property type="component" value="Chromosome"/>
</dbReference>
<dbReference type="GO" id="GO:0005737">
    <property type="term" value="C:cytoplasm"/>
    <property type="evidence" value="ECO:0007669"/>
    <property type="project" value="UniProtKB-SubCell"/>
</dbReference>
<dbReference type="GO" id="GO:0008990">
    <property type="term" value="F:rRNA (guanine-N2-)-methyltransferase activity"/>
    <property type="evidence" value="ECO:0007669"/>
    <property type="project" value="UniProtKB-UniRule"/>
</dbReference>
<dbReference type="CDD" id="cd02440">
    <property type="entry name" value="AdoMet_MTases"/>
    <property type="match status" value="1"/>
</dbReference>
<dbReference type="FunFam" id="3.40.1630.10:FF:000001">
    <property type="entry name" value="Ribosomal RNA small subunit methyltransferase J"/>
    <property type="match status" value="1"/>
</dbReference>
<dbReference type="FunFam" id="3.40.50.150:FF:000072">
    <property type="entry name" value="Ribosomal RNA small subunit methyltransferase J"/>
    <property type="match status" value="1"/>
</dbReference>
<dbReference type="Gene3D" id="3.40.50.150">
    <property type="entry name" value="Vaccinia Virus protein VP39"/>
    <property type="match status" value="1"/>
</dbReference>
<dbReference type="Gene3D" id="3.40.1630.10">
    <property type="entry name" value="YhiQ-like domain"/>
    <property type="match status" value="1"/>
</dbReference>
<dbReference type="HAMAP" id="MF_01523">
    <property type="entry name" value="16SrRNA_methyltr_J"/>
    <property type="match status" value="1"/>
</dbReference>
<dbReference type="InterPro" id="IPR007536">
    <property type="entry name" value="16SrRNA_methylTrfase_J"/>
</dbReference>
<dbReference type="InterPro" id="IPR029063">
    <property type="entry name" value="SAM-dependent_MTases_sf"/>
</dbReference>
<dbReference type="NCBIfam" id="NF008012">
    <property type="entry name" value="PRK10742.1"/>
    <property type="match status" value="1"/>
</dbReference>
<dbReference type="PANTHER" id="PTHR36112">
    <property type="entry name" value="RIBOSOMAL RNA SMALL SUBUNIT METHYLTRANSFERASE J"/>
    <property type="match status" value="1"/>
</dbReference>
<dbReference type="PANTHER" id="PTHR36112:SF1">
    <property type="entry name" value="RIBOSOMAL RNA SMALL SUBUNIT METHYLTRANSFERASE J"/>
    <property type="match status" value="1"/>
</dbReference>
<dbReference type="Pfam" id="PF04445">
    <property type="entry name" value="SAM_MT"/>
    <property type="match status" value="1"/>
</dbReference>
<dbReference type="SUPFAM" id="SSF53335">
    <property type="entry name" value="S-adenosyl-L-methionine-dependent methyltransferases"/>
    <property type="match status" value="1"/>
</dbReference>
<gene>
    <name evidence="1" type="primary">rsmJ</name>
    <name type="synonym">yhiQ</name>
    <name type="ordered locus">SCH_3522</name>
</gene>
<keyword id="KW-0963">Cytoplasm</keyword>
<keyword id="KW-0489">Methyltransferase</keyword>
<keyword id="KW-0698">rRNA processing</keyword>
<keyword id="KW-0949">S-adenosyl-L-methionine</keyword>
<keyword id="KW-0808">Transferase</keyword>
<comment type="function">
    <text evidence="1">Specifically methylates the guanosine in position 1516 of 16S rRNA.</text>
</comment>
<comment type="catalytic activity">
    <reaction evidence="1">
        <text>guanosine(1516) in 16S rRNA + S-adenosyl-L-methionine = N(2)-methylguanosine(1516) in 16S rRNA + S-adenosyl-L-homocysteine + H(+)</text>
        <dbReference type="Rhea" id="RHEA:43220"/>
        <dbReference type="Rhea" id="RHEA-COMP:10412"/>
        <dbReference type="Rhea" id="RHEA-COMP:10413"/>
        <dbReference type="ChEBI" id="CHEBI:15378"/>
        <dbReference type="ChEBI" id="CHEBI:57856"/>
        <dbReference type="ChEBI" id="CHEBI:59789"/>
        <dbReference type="ChEBI" id="CHEBI:74269"/>
        <dbReference type="ChEBI" id="CHEBI:74481"/>
        <dbReference type="EC" id="2.1.1.242"/>
    </reaction>
</comment>
<comment type="subcellular location">
    <subcellularLocation>
        <location evidence="1">Cytoplasm</location>
    </subcellularLocation>
</comment>
<comment type="similarity">
    <text evidence="1">Belongs to the methyltransferase superfamily. RsmJ family.</text>
</comment>
<reference key="1">
    <citation type="journal article" date="2005" name="Nucleic Acids Res.">
        <title>The genome sequence of Salmonella enterica serovar Choleraesuis, a highly invasive and resistant zoonotic pathogen.</title>
        <authorList>
            <person name="Chiu C.-H."/>
            <person name="Tang P."/>
            <person name="Chu C."/>
            <person name="Hu S."/>
            <person name="Bao Q."/>
            <person name="Yu J."/>
            <person name="Chou Y.-Y."/>
            <person name="Wang H.-S."/>
            <person name="Lee Y.-S."/>
        </authorList>
    </citation>
    <scope>NUCLEOTIDE SEQUENCE [LARGE SCALE GENOMIC DNA]</scope>
    <source>
        <strain>SC-B67</strain>
    </source>
</reference>
<protein>
    <recommendedName>
        <fullName evidence="1">Ribosomal RNA small subunit methyltransferase J</fullName>
        <ecNumber evidence="1">2.1.1.242</ecNumber>
    </recommendedName>
    <alternativeName>
        <fullName evidence="1">16S rRNA m2G1516 methyltransferase</fullName>
    </alternativeName>
    <alternativeName>
        <fullName evidence="1">rRNA (guanine-N(2)-)-methyltransferase</fullName>
    </alternativeName>
</protein>
<sequence length="252" mass="27268">MQICLMDETGATDGALSVLAARWGLEHDEDNPMALVLTPQHLELRKRDEPKLGGIFVDFVGGAMAHRRKFGGGRGEAVAKAVGIKGDYLPDVVDATAGLGRDAFVLASVGCRVRMLERNPVVAALLDDGLTRGYADADIGGWLQERLQLIHASSLTALTDITPRPQVVYLDPMFPHRQKSALVKKEMRVFQSLVGPDLDADGLLEPARQLATKRVVVKRPDYAPPLADVATPNAVVTKGHRFDIYAGTPLTE</sequence>
<name>RSMJ_SALCH</name>
<accession>Q57IN4</accession>
<evidence type="ECO:0000255" key="1">
    <source>
        <dbReference type="HAMAP-Rule" id="MF_01523"/>
    </source>
</evidence>
<feature type="chain" id="PRO_0000212088" description="Ribosomal RNA small subunit methyltransferase J">
    <location>
        <begin position="1"/>
        <end position="252"/>
    </location>
</feature>
<feature type="binding site" evidence="1">
    <location>
        <begin position="101"/>
        <end position="102"/>
    </location>
    <ligand>
        <name>S-adenosyl-L-methionine</name>
        <dbReference type="ChEBI" id="CHEBI:59789"/>
    </ligand>
</feature>
<feature type="binding site" evidence="1">
    <location>
        <begin position="117"/>
        <end position="118"/>
    </location>
    <ligand>
        <name>S-adenosyl-L-methionine</name>
        <dbReference type="ChEBI" id="CHEBI:59789"/>
    </ligand>
</feature>
<feature type="binding site" evidence="1">
    <location>
        <begin position="153"/>
        <end position="154"/>
    </location>
    <ligand>
        <name>S-adenosyl-L-methionine</name>
        <dbReference type="ChEBI" id="CHEBI:59789"/>
    </ligand>
</feature>
<feature type="binding site" evidence="1">
    <location>
        <position position="171"/>
    </location>
    <ligand>
        <name>S-adenosyl-L-methionine</name>
        <dbReference type="ChEBI" id="CHEBI:59789"/>
    </ligand>
</feature>
<organism>
    <name type="scientific">Salmonella choleraesuis (strain SC-B67)</name>
    <dbReference type="NCBI Taxonomy" id="321314"/>
    <lineage>
        <taxon>Bacteria</taxon>
        <taxon>Pseudomonadati</taxon>
        <taxon>Pseudomonadota</taxon>
        <taxon>Gammaproteobacteria</taxon>
        <taxon>Enterobacterales</taxon>
        <taxon>Enterobacteriaceae</taxon>
        <taxon>Salmonella</taxon>
    </lineage>
</organism>